<reference key="1">
    <citation type="journal article" date="2002" name="Science">
        <title>50 million years of genomic stasis in endosymbiotic bacteria.</title>
        <authorList>
            <person name="Tamas I."/>
            <person name="Klasson L."/>
            <person name="Canbaeck B."/>
            <person name="Naeslund A.K."/>
            <person name="Eriksson A.-S."/>
            <person name="Wernegreen J.J."/>
            <person name="Sandstroem J.P."/>
            <person name="Moran N.A."/>
            <person name="Andersson S.G.E."/>
        </authorList>
    </citation>
    <scope>NUCLEOTIDE SEQUENCE [LARGE SCALE GENOMIC DNA]</scope>
    <source>
        <strain>Sg</strain>
    </source>
</reference>
<name>Y114_BUCAP</name>
<protein>
    <recommendedName>
        <fullName>Uncharacterized protein BUsg_114</fullName>
    </recommendedName>
</protein>
<sequence length="129" mass="15056">MKIEKMNFYSPKKYKWKGIKITEQAIEQILFLINKNPKNKGIRIGTKKSGCAGFRYTMELVKNNTIEKENKNDIVFYYNNILVYISLKEAPFLNGIKIDFVKDSINEVFKYCNPRIKTFCGCGESFSID</sequence>
<gene>
    <name type="ordered locus">BUsg_114</name>
</gene>
<evidence type="ECO:0000305" key="1"/>
<feature type="chain" id="PRO_0000077013" description="Uncharacterized protein BUsg_114">
    <location>
        <begin position="1"/>
        <end position="129"/>
    </location>
</feature>
<comment type="similarity">
    <text evidence="1">Belongs to the HesB/IscA family.</text>
</comment>
<accession>Q8KA13</accession>
<dbReference type="EMBL" id="AE013218">
    <property type="protein sequence ID" value="AAM67683.1"/>
    <property type="molecule type" value="Genomic_DNA"/>
</dbReference>
<dbReference type="RefSeq" id="WP_011053649.1">
    <property type="nucleotide sequence ID" value="NC_004061.1"/>
</dbReference>
<dbReference type="SMR" id="Q8KA13"/>
<dbReference type="STRING" id="198804.BUsg_114"/>
<dbReference type="GeneID" id="93003584"/>
<dbReference type="KEGG" id="bas:BUsg_114"/>
<dbReference type="eggNOG" id="COG0316">
    <property type="taxonomic scope" value="Bacteria"/>
</dbReference>
<dbReference type="HOGENOM" id="CLU_069054_4_2_6"/>
<dbReference type="Proteomes" id="UP000000416">
    <property type="component" value="Chromosome"/>
</dbReference>
<dbReference type="GO" id="GO:0005829">
    <property type="term" value="C:cytosol"/>
    <property type="evidence" value="ECO:0007669"/>
    <property type="project" value="TreeGrafter"/>
</dbReference>
<dbReference type="GO" id="GO:0051537">
    <property type="term" value="F:2 iron, 2 sulfur cluster binding"/>
    <property type="evidence" value="ECO:0007669"/>
    <property type="project" value="TreeGrafter"/>
</dbReference>
<dbReference type="GO" id="GO:0016226">
    <property type="term" value="P:iron-sulfur cluster assembly"/>
    <property type="evidence" value="ECO:0007669"/>
    <property type="project" value="InterPro"/>
</dbReference>
<dbReference type="Gene3D" id="2.60.300.12">
    <property type="entry name" value="HesB-like domain"/>
    <property type="match status" value="1"/>
</dbReference>
<dbReference type="InterPro" id="IPR050322">
    <property type="entry name" value="Fe-S_cluster_asmbl/transfer"/>
</dbReference>
<dbReference type="InterPro" id="IPR000361">
    <property type="entry name" value="FeS_biogenesis"/>
</dbReference>
<dbReference type="InterPro" id="IPR016092">
    <property type="entry name" value="FeS_cluster_insertion"/>
</dbReference>
<dbReference type="InterPro" id="IPR017870">
    <property type="entry name" value="FeS_cluster_insertion_CS"/>
</dbReference>
<dbReference type="InterPro" id="IPR035903">
    <property type="entry name" value="HesB-like_dom_sf"/>
</dbReference>
<dbReference type="NCBIfam" id="TIGR00049">
    <property type="entry name" value="iron-sulfur cluster assembly accessory protein"/>
    <property type="match status" value="1"/>
</dbReference>
<dbReference type="PANTHER" id="PTHR10072">
    <property type="entry name" value="IRON-SULFUR CLUSTER ASSEMBLY PROTEIN"/>
    <property type="match status" value="1"/>
</dbReference>
<dbReference type="PANTHER" id="PTHR10072:SF47">
    <property type="entry name" value="PROTEIN SUFA"/>
    <property type="match status" value="1"/>
</dbReference>
<dbReference type="Pfam" id="PF01521">
    <property type="entry name" value="Fe-S_biosyn"/>
    <property type="match status" value="1"/>
</dbReference>
<dbReference type="SUPFAM" id="SSF89360">
    <property type="entry name" value="HesB-like domain"/>
    <property type="match status" value="1"/>
</dbReference>
<dbReference type="PROSITE" id="PS01152">
    <property type="entry name" value="HESB"/>
    <property type="match status" value="1"/>
</dbReference>
<proteinExistence type="inferred from homology"/>
<organism>
    <name type="scientific">Buchnera aphidicola subsp. Schizaphis graminum (strain Sg)</name>
    <dbReference type="NCBI Taxonomy" id="198804"/>
    <lineage>
        <taxon>Bacteria</taxon>
        <taxon>Pseudomonadati</taxon>
        <taxon>Pseudomonadota</taxon>
        <taxon>Gammaproteobacteria</taxon>
        <taxon>Enterobacterales</taxon>
        <taxon>Erwiniaceae</taxon>
        <taxon>Buchnera</taxon>
    </lineage>
</organism>